<accession>Q5VT40</accession>
<accession>B7Z693</accession>
<proteinExistence type="evidence at transcript level"/>
<name>FA78B_HUMAN</name>
<comment type="similarity">
    <text evidence="1">Belongs to the FAM78 family.</text>
</comment>
<evidence type="ECO:0000305" key="1"/>
<organism>
    <name type="scientific">Homo sapiens</name>
    <name type="common">Human</name>
    <dbReference type="NCBI Taxonomy" id="9606"/>
    <lineage>
        <taxon>Eukaryota</taxon>
        <taxon>Metazoa</taxon>
        <taxon>Chordata</taxon>
        <taxon>Craniata</taxon>
        <taxon>Vertebrata</taxon>
        <taxon>Euteleostomi</taxon>
        <taxon>Mammalia</taxon>
        <taxon>Eutheria</taxon>
        <taxon>Euarchontoglires</taxon>
        <taxon>Primates</taxon>
        <taxon>Haplorrhini</taxon>
        <taxon>Catarrhini</taxon>
        <taxon>Hominidae</taxon>
        <taxon>Homo</taxon>
    </lineage>
</organism>
<protein>
    <recommendedName>
        <fullName>Protein FAM78B</fullName>
    </recommendedName>
</protein>
<gene>
    <name type="primary">FAM78B</name>
</gene>
<dbReference type="EMBL" id="AK299946">
    <property type="protein sequence ID" value="BAH13179.1"/>
    <property type="molecule type" value="mRNA"/>
</dbReference>
<dbReference type="EMBL" id="AL626787">
    <property type="status" value="NOT_ANNOTATED_CDS"/>
    <property type="molecule type" value="Genomic_DNA"/>
</dbReference>
<dbReference type="EMBL" id="AL596087">
    <property type="status" value="NOT_ANNOTATED_CDS"/>
    <property type="molecule type" value="Genomic_DNA"/>
</dbReference>
<dbReference type="EMBL" id="CH471067">
    <property type="protein sequence ID" value="EAW90771.1"/>
    <property type="molecule type" value="Genomic_DNA"/>
</dbReference>
<dbReference type="EMBL" id="BC114214">
    <property type="protein sequence ID" value="AAI14215.1"/>
    <property type="molecule type" value="mRNA"/>
</dbReference>
<dbReference type="CCDS" id="CCDS30931.1"/>
<dbReference type="RefSeq" id="NP_001017961.1">
    <property type="nucleotide sequence ID" value="NM_001017961.5"/>
</dbReference>
<dbReference type="RefSeq" id="XP_016855906.1">
    <property type="nucleotide sequence ID" value="XM_017000417.1"/>
</dbReference>
<dbReference type="RefSeq" id="XP_016855907.1">
    <property type="nucleotide sequence ID" value="XM_017000418.1"/>
</dbReference>
<dbReference type="BioGRID" id="127202">
    <property type="interactions" value="6"/>
</dbReference>
<dbReference type="FunCoup" id="Q5VT40">
    <property type="interactions" value="21"/>
</dbReference>
<dbReference type="IntAct" id="Q5VT40">
    <property type="interactions" value="5"/>
</dbReference>
<dbReference type="GlyGen" id="Q5VT40">
    <property type="glycosylation" value="1 site, 1 O-linked glycan (1 site)"/>
</dbReference>
<dbReference type="BioMuta" id="FAM78B"/>
<dbReference type="DMDM" id="74746881"/>
<dbReference type="jPOST" id="Q5VT40"/>
<dbReference type="PaxDb" id="9606-ENSP00000339681"/>
<dbReference type="PeptideAtlas" id="Q5VT40"/>
<dbReference type="ProteomicsDB" id="65301"/>
<dbReference type="Antibodypedia" id="34334">
    <property type="antibodies" value="119 antibodies from 17 providers"/>
</dbReference>
<dbReference type="DNASU" id="149297"/>
<dbReference type="Ensembl" id="ENST00000338353.4">
    <property type="protein sequence ID" value="ENSP00000339681.3"/>
    <property type="gene ID" value="ENSG00000188859.7"/>
</dbReference>
<dbReference type="Ensembl" id="ENST00000354422.4">
    <property type="protein sequence ID" value="ENSP00000346404.3"/>
    <property type="gene ID" value="ENSG00000188859.7"/>
</dbReference>
<dbReference type="Ensembl" id="ENST00000456900.1">
    <property type="protein sequence ID" value="ENSP00000389945.1"/>
    <property type="gene ID" value="ENSG00000188859.7"/>
</dbReference>
<dbReference type="GeneID" id="149297"/>
<dbReference type="KEGG" id="hsa:149297"/>
<dbReference type="MANE-Select" id="ENST00000354422.4">
    <property type="protein sequence ID" value="ENSP00000346404.3"/>
    <property type="RefSeq nucleotide sequence ID" value="NM_001017961.5"/>
    <property type="RefSeq protein sequence ID" value="NP_001017961.1"/>
</dbReference>
<dbReference type="UCSC" id="uc021pef.2">
    <property type="organism name" value="human"/>
</dbReference>
<dbReference type="AGR" id="HGNC:13495"/>
<dbReference type="CTD" id="149297"/>
<dbReference type="DisGeNET" id="149297"/>
<dbReference type="GeneCards" id="FAM78B"/>
<dbReference type="HGNC" id="HGNC:13495">
    <property type="gene designation" value="FAM78B"/>
</dbReference>
<dbReference type="HPA" id="ENSG00000188859">
    <property type="expression patterns" value="Low tissue specificity"/>
</dbReference>
<dbReference type="neXtProt" id="NX_Q5VT40"/>
<dbReference type="OpenTargets" id="ENSG00000188859"/>
<dbReference type="PharmGKB" id="PA142671841"/>
<dbReference type="VEuPathDB" id="HostDB:ENSG00000188859"/>
<dbReference type="eggNOG" id="ENOG502QPXK">
    <property type="taxonomic scope" value="Eukaryota"/>
</dbReference>
<dbReference type="GeneTree" id="ENSGT00390000018059"/>
<dbReference type="HOGENOM" id="CLU_085745_0_0_1"/>
<dbReference type="InParanoid" id="Q5VT40"/>
<dbReference type="OMA" id="IDHCPTI"/>
<dbReference type="OrthoDB" id="9971204at2759"/>
<dbReference type="PAN-GO" id="Q5VT40">
    <property type="GO annotations" value="0 GO annotations based on evolutionary models"/>
</dbReference>
<dbReference type="PhylomeDB" id="Q5VT40"/>
<dbReference type="TreeFam" id="TF329533"/>
<dbReference type="PathwayCommons" id="Q5VT40"/>
<dbReference type="SignaLink" id="Q5VT40"/>
<dbReference type="BioGRID-ORCS" id="149297">
    <property type="hits" value="10 hits in 1146 CRISPR screens"/>
</dbReference>
<dbReference type="GenomeRNAi" id="149297"/>
<dbReference type="Pharos" id="Q5VT40">
    <property type="development level" value="Tdark"/>
</dbReference>
<dbReference type="PRO" id="PR:Q5VT40"/>
<dbReference type="Proteomes" id="UP000005640">
    <property type="component" value="Chromosome 1"/>
</dbReference>
<dbReference type="RNAct" id="Q5VT40">
    <property type="molecule type" value="protein"/>
</dbReference>
<dbReference type="Bgee" id="ENSG00000188859">
    <property type="expression patterns" value="Expressed in endothelial cell and 119 other cell types or tissues"/>
</dbReference>
<dbReference type="ExpressionAtlas" id="Q5VT40">
    <property type="expression patterns" value="baseline and differential"/>
</dbReference>
<dbReference type="InterPro" id="IPR029638">
    <property type="entry name" value="FAM78"/>
</dbReference>
<dbReference type="PANTHER" id="PTHR31655">
    <property type="entry name" value="PROTEIN FAM78A"/>
    <property type="match status" value="1"/>
</dbReference>
<dbReference type="PANTHER" id="PTHR31655:SF0">
    <property type="entry name" value="PROTEIN FAM78B"/>
    <property type="match status" value="1"/>
</dbReference>
<sequence>MGCIQSITCKARIRRENIVVYDVCATIDQCPTRIEETSPIVLRYKTPYFKASARVVMPPIPRHETWVVGWIQACNQMEFFNTYSDLGMSSWELPDLREGRVKAISDSDGVSYPWYGNTTETVTLVGPTNKISRFSVSMNDNFYPSVTWAVPVSDSNVPLLTRIKRDQSFTTWLVAMNTTTKEKIILQTIKWRMRVDIEVDPLQLLGQRARLVGRTQQEQPRILSRMEPIPPNALVKPNANDAQVLMWRPKRGPPLVVIPPK</sequence>
<reference key="1">
    <citation type="journal article" date="2004" name="Nat. Genet.">
        <title>Complete sequencing and characterization of 21,243 full-length human cDNAs.</title>
        <authorList>
            <person name="Ota T."/>
            <person name="Suzuki Y."/>
            <person name="Nishikawa T."/>
            <person name="Otsuki T."/>
            <person name="Sugiyama T."/>
            <person name="Irie R."/>
            <person name="Wakamatsu A."/>
            <person name="Hayashi K."/>
            <person name="Sato H."/>
            <person name="Nagai K."/>
            <person name="Kimura K."/>
            <person name="Makita H."/>
            <person name="Sekine M."/>
            <person name="Obayashi M."/>
            <person name="Nishi T."/>
            <person name="Shibahara T."/>
            <person name="Tanaka T."/>
            <person name="Ishii S."/>
            <person name="Yamamoto J."/>
            <person name="Saito K."/>
            <person name="Kawai Y."/>
            <person name="Isono Y."/>
            <person name="Nakamura Y."/>
            <person name="Nagahari K."/>
            <person name="Murakami K."/>
            <person name="Yasuda T."/>
            <person name="Iwayanagi T."/>
            <person name="Wagatsuma M."/>
            <person name="Shiratori A."/>
            <person name="Sudo H."/>
            <person name="Hosoiri T."/>
            <person name="Kaku Y."/>
            <person name="Kodaira H."/>
            <person name="Kondo H."/>
            <person name="Sugawara M."/>
            <person name="Takahashi M."/>
            <person name="Kanda K."/>
            <person name="Yokoi T."/>
            <person name="Furuya T."/>
            <person name="Kikkawa E."/>
            <person name="Omura Y."/>
            <person name="Abe K."/>
            <person name="Kamihara K."/>
            <person name="Katsuta N."/>
            <person name="Sato K."/>
            <person name="Tanikawa M."/>
            <person name="Yamazaki M."/>
            <person name="Ninomiya K."/>
            <person name="Ishibashi T."/>
            <person name="Yamashita H."/>
            <person name="Murakawa K."/>
            <person name="Fujimori K."/>
            <person name="Tanai H."/>
            <person name="Kimata M."/>
            <person name="Watanabe M."/>
            <person name="Hiraoka S."/>
            <person name="Chiba Y."/>
            <person name="Ishida S."/>
            <person name="Ono Y."/>
            <person name="Takiguchi S."/>
            <person name="Watanabe S."/>
            <person name="Yosida M."/>
            <person name="Hotuta T."/>
            <person name="Kusano J."/>
            <person name="Kanehori K."/>
            <person name="Takahashi-Fujii A."/>
            <person name="Hara H."/>
            <person name="Tanase T.-O."/>
            <person name="Nomura Y."/>
            <person name="Togiya S."/>
            <person name="Komai F."/>
            <person name="Hara R."/>
            <person name="Takeuchi K."/>
            <person name="Arita M."/>
            <person name="Imose N."/>
            <person name="Musashino K."/>
            <person name="Yuuki H."/>
            <person name="Oshima A."/>
            <person name="Sasaki N."/>
            <person name="Aotsuka S."/>
            <person name="Yoshikawa Y."/>
            <person name="Matsunawa H."/>
            <person name="Ichihara T."/>
            <person name="Shiohata N."/>
            <person name="Sano S."/>
            <person name="Moriya S."/>
            <person name="Momiyama H."/>
            <person name="Satoh N."/>
            <person name="Takami S."/>
            <person name="Terashima Y."/>
            <person name="Suzuki O."/>
            <person name="Nakagawa S."/>
            <person name="Senoh A."/>
            <person name="Mizoguchi H."/>
            <person name="Goto Y."/>
            <person name="Shimizu F."/>
            <person name="Wakebe H."/>
            <person name="Hishigaki H."/>
            <person name="Watanabe T."/>
            <person name="Sugiyama A."/>
            <person name="Takemoto M."/>
            <person name="Kawakami B."/>
            <person name="Yamazaki M."/>
            <person name="Watanabe K."/>
            <person name="Kumagai A."/>
            <person name="Itakura S."/>
            <person name="Fukuzumi Y."/>
            <person name="Fujimori Y."/>
            <person name="Komiyama M."/>
            <person name="Tashiro H."/>
            <person name="Tanigami A."/>
            <person name="Fujiwara T."/>
            <person name="Ono T."/>
            <person name="Yamada K."/>
            <person name="Fujii Y."/>
            <person name="Ozaki K."/>
            <person name="Hirao M."/>
            <person name="Ohmori Y."/>
            <person name="Kawabata A."/>
            <person name="Hikiji T."/>
            <person name="Kobatake N."/>
            <person name="Inagaki H."/>
            <person name="Ikema Y."/>
            <person name="Okamoto S."/>
            <person name="Okitani R."/>
            <person name="Kawakami T."/>
            <person name="Noguchi S."/>
            <person name="Itoh T."/>
            <person name="Shigeta K."/>
            <person name="Senba T."/>
            <person name="Matsumura K."/>
            <person name="Nakajima Y."/>
            <person name="Mizuno T."/>
            <person name="Morinaga M."/>
            <person name="Sasaki M."/>
            <person name="Togashi T."/>
            <person name="Oyama M."/>
            <person name="Hata H."/>
            <person name="Watanabe M."/>
            <person name="Komatsu T."/>
            <person name="Mizushima-Sugano J."/>
            <person name="Satoh T."/>
            <person name="Shirai Y."/>
            <person name="Takahashi Y."/>
            <person name="Nakagawa K."/>
            <person name="Okumura K."/>
            <person name="Nagase T."/>
            <person name="Nomura N."/>
            <person name="Kikuchi H."/>
            <person name="Masuho Y."/>
            <person name="Yamashita R."/>
            <person name="Nakai K."/>
            <person name="Yada T."/>
            <person name="Nakamura Y."/>
            <person name="Ohara O."/>
            <person name="Isogai T."/>
            <person name="Sugano S."/>
        </authorList>
    </citation>
    <scope>NUCLEOTIDE SEQUENCE [LARGE SCALE MRNA]</scope>
    <source>
        <tissue>Brain</tissue>
    </source>
</reference>
<reference key="2">
    <citation type="journal article" date="2006" name="Nature">
        <title>The DNA sequence and biological annotation of human chromosome 1.</title>
        <authorList>
            <person name="Gregory S.G."/>
            <person name="Barlow K.F."/>
            <person name="McLay K.E."/>
            <person name="Kaul R."/>
            <person name="Swarbreck D."/>
            <person name="Dunham A."/>
            <person name="Scott C.E."/>
            <person name="Howe K.L."/>
            <person name="Woodfine K."/>
            <person name="Spencer C.C.A."/>
            <person name="Jones M.C."/>
            <person name="Gillson C."/>
            <person name="Searle S."/>
            <person name="Zhou Y."/>
            <person name="Kokocinski F."/>
            <person name="McDonald L."/>
            <person name="Evans R."/>
            <person name="Phillips K."/>
            <person name="Atkinson A."/>
            <person name="Cooper R."/>
            <person name="Jones C."/>
            <person name="Hall R.E."/>
            <person name="Andrews T.D."/>
            <person name="Lloyd C."/>
            <person name="Ainscough R."/>
            <person name="Almeida J.P."/>
            <person name="Ambrose K.D."/>
            <person name="Anderson F."/>
            <person name="Andrew R.W."/>
            <person name="Ashwell R.I.S."/>
            <person name="Aubin K."/>
            <person name="Babbage A.K."/>
            <person name="Bagguley C.L."/>
            <person name="Bailey J."/>
            <person name="Beasley H."/>
            <person name="Bethel G."/>
            <person name="Bird C.P."/>
            <person name="Bray-Allen S."/>
            <person name="Brown J.Y."/>
            <person name="Brown A.J."/>
            <person name="Buckley D."/>
            <person name="Burton J."/>
            <person name="Bye J."/>
            <person name="Carder C."/>
            <person name="Chapman J.C."/>
            <person name="Clark S.Y."/>
            <person name="Clarke G."/>
            <person name="Clee C."/>
            <person name="Cobley V."/>
            <person name="Collier R.E."/>
            <person name="Corby N."/>
            <person name="Coville G.J."/>
            <person name="Davies J."/>
            <person name="Deadman R."/>
            <person name="Dunn M."/>
            <person name="Earthrowl M."/>
            <person name="Ellington A.G."/>
            <person name="Errington H."/>
            <person name="Frankish A."/>
            <person name="Frankland J."/>
            <person name="French L."/>
            <person name="Garner P."/>
            <person name="Garnett J."/>
            <person name="Gay L."/>
            <person name="Ghori M.R.J."/>
            <person name="Gibson R."/>
            <person name="Gilby L.M."/>
            <person name="Gillett W."/>
            <person name="Glithero R.J."/>
            <person name="Grafham D.V."/>
            <person name="Griffiths C."/>
            <person name="Griffiths-Jones S."/>
            <person name="Grocock R."/>
            <person name="Hammond S."/>
            <person name="Harrison E.S.I."/>
            <person name="Hart E."/>
            <person name="Haugen E."/>
            <person name="Heath P.D."/>
            <person name="Holmes S."/>
            <person name="Holt K."/>
            <person name="Howden P.J."/>
            <person name="Hunt A.R."/>
            <person name="Hunt S.E."/>
            <person name="Hunter G."/>
            <person name="Isherwood J."/>
            <person name="James R."/>
            <person name="Johnson C."/>
            <person name="Johnson D."/>
            <person name="Joy A."/>
            <person name="Kay M."/>
            <person name="Kershaw J.K."/>
            <person name="Kibukawa M."/>
            <person name="Kimberley A.M."/>
            <person name="King A."/>
            <person name="Knights A.J."/>
            <person name="Lad H."/>
            <person name="Laird G."/>
            <person name="Lawlor S."/>
            <person name="Leongamornlert D.A."/>
            <person name="Lloyd D.M."/>
            <person name="Loveland J."/>
            <person name="Lovell J."/>
            <person name="Lush M.J."/>
            <person name="Lyne R."/>
            <person name="Martin S."/>
            <person name="Mashreghi-Mohammadi M."/>
            <person name="Matthews L."/>
            <person name="Matthews N.S.W."/>
            <person name="McLaren S."/>
            <person name="Milne S."/>
            <person name="Mistry S."/>
            <person name="Moore M.J.F."/>
            <person name="Nickerson T."/>
            <person name="O'Dell C.N."/>
            <person name="Oliver K."/>
            <person name="Palmeiri A."/>
            <person name="Palmer S.A."/>
            <person name="Parker A."/>
            <person name="Patel D."/>
            <person name="Pearce A.V."/>
            <person name="Peck A.I."/>
            <person name="Pelan S."/>
            <person name="Phelps K."/>
            <person name="Phillimore B.J."/>
            <person name="Plumb R."/>
            <person name="Rajan J."/>
            <person name="Raymond C."/>
            <person name="Rouse G."/>
            <person name="Saenphimmachak C."/>
            <person name="Sehra H.K."/>
            <person name="Sheridan E."/>
            <person name="Shownkeen R."/>
            <person name="Sims S."/>
            <person name="Skuce C.D."/>
            <person name="Smith M."/>
            <person name="Steward C."/>
            <person name="Subramanian S."/>
            <person name="Sycamore N."/>
            <person name="Tracey A."/>
            <person name="Tromans A."/>
            <person name="Van Helmond Z."/>
            <person name="Wall M."/>
            <person name="Wallis J.M."/>
            <person name="White S."/>
            <person name="Whitehead S.L."/>
            <person name="Wilkinson J.E."/>
            <person name="Willey D.L."/>
            <person name="Williams H."/>
            <person name="Wilming L."/>
            <person name="Wray P.W."/>
            <person name="Wu Z."/>
            <person name="Coulson A."/>
            <person name="Vaudin M."/>
            <person name="Sulston J.E."/>
            <person name="Durbin R.M."/>
            <person name="Hubbard T."/>
            <person name="Wooster R."/>
            <person name="Dunham I."/>
            <person name="Carter N.P."/>
            <person name="McVean G."/>
            <person name="Ross M.T."/>
            <person name="Harrow J."/>
            <person name="Olson M.V."/>
            <person name="Beck S."/>
            <person name="Rogers J."/>
            <person name="Bentley D.R."/>
        </authorList>
    </citation>
    <scope>NUCLEOTIDE SEQUENCE [LARGE SCALE GENOMIC DNA]</scope>
</reference>
<reference key="3">
    <citation type="submission" date="2005-07" db="EMBL/GenBank/DDBJ databases">
        <authorList>
            <person name="Mural R.J."/>
            <person name="Istrail S."/>
            <person name="Sutton G.G."/>
            <person name="Florea L."/>
            <person name="Halpern A.L."/>
            <person name="Mobarry C.M."/>
            <person name="Lippert R."/>
            <person name="Walenz B."/>
            <person name="Shatkay H."/>
            <person name="Dew I."/>
            <person name="Miller J.R."/>
            <person name="Flanigan M.J."/>
            <person name="Edwards N.J."/>
            <person name="Bolanos R."/>
            <person name="Fasulo D."/>
            <person name="Halldorsson B.V."/>
            <person name="Hannenhalli S."/>
            <person name="Turner R."/>
            <person name="Yooseph S."/>
            <person name="Lu F."/>
            <person name="Nusskern D.R."/>
            <person name="Shue B.C."/>
            <person name="Zheng X.H."/>
            <person name="Zhong F."/>
            <person name="Delcher A.L."/>
            <person name="Huson D.H."/>
            <person name="Kravitz S.A."/>
            <person name="Mouchard L."/>
            <person name="Reinert K."/>
            <person name="Remington K.A."/>
            <person name="Clark A.G."/>
            <person name="Waterman M.S."/>
            <person name="Eichler E.E."/>
            <person name="Adams M.D."/>
            <person name="Hunkapiller M.W."/>
            <person name="Myers E.W."/>
            <person name="Venter J.C."/>
        </authorList>
    </citation>
    <scope>NUCLEOTIDE SEQUENCE [LARGE SCALE GENOMIC DNA]</scope>
</reference>
<reference key="4">
    <citation type="journal article" date="2004" name="Genome Res.">
        <title>The status, quality, and expansion of the NIH full-length cDNA project: the Mammalian Gene Collection (MGC).</title>
        <authorList>
            <consortium name="The MGC Project Team"/>
        </authorList>
    </citation>
    <scope>NUCLEOTIDE SEQUENCE [LARGE SCALE MRNA]</scope>
    <source>
        <tissue>Ovary</tissue>
    </source>
</reference>
<feature type="chain" id="PRO_0000265114" description="Protein FAM78B">
    <location>
        <begin position="1"/>
        <end position="261"/>
    </location>
</feature>
<keyword id="KW-1185">Reference proteome</keyword>